<name>ATPE_RHOP2</name>
<reference key="1">
    <citation type="submission" date="2006-01" db="EMBL/GenBank/DDBJ databases">
        <title>Complete sequence of Rhodopseudomonas palustris HaA2.</title>
        <authorList>
            <consortium name="US DOE Joint Genome Institute"/>
            <person name="Copeland A."/>
            <person name="Lucas S."/>
            <person name="Lapidus A."/>
            <person name="Barry K."/>
            <person name="Detter J.C."/>
            <person name="Glavina T."/>
            <person name="Hammon N."/>
            <person name="Israni S."/>
            <person name="Pitluck S."/>
            <person name="Chain P."/>
            <person name="Malfatti S."/>
            <person name="Shin M."/>
            <person name="Vergez L."/>
            <person name="Schmutz J."/>
            <person name="Larimer F."/>
            <person name="Land M."/>
            <person name="Hauser L."/>
            <person name="Pelletier D.A."/>
            <person name="Kyrpides N."/>
            <person name="Anderson I."/>
            <person name="Oda Y."/>
            <person name="Harwood C.S."/>
            <person name="Richardson P."/>
        </authorList>
    </citation>
    <scope>NUCLEOTIDE SEQUENCE [LARGE SCALE GENOMIC DNA]</scope>
    <source>
        <strain>HaA2</strain>
    </source>
</reference>
<keyword id="KW-0066">ATP synthesis</keyword>
<keyword id="KW-0997">Cell inner membrane</keyword>
<keyword id="KW-1003">Cell membrane</keyword>
<keyword id="KW-0139">CF(1)</keyword>
<keyword id="KW-0375">Hydrogen ion transport</keyword>
<keyword id="KW-0406">Ion transport</keyword>
<keyword id="KW-0472">Membrane</keyword>
<keyword id="KW-1185">Reference proteome</keyword>
<keyword id="KW-0813">Transport</keyword>
<gene>
    <name evidence="1" type="primary">atpC</name>
    <name type="ordered locus">RPB_0264</name>
</gene>
<proteinExistence type="inferred from homology"/>
<evidence type="ECO:0000255" key="1">
    <source>
        <dbReference type="HAMAP-Rule" id="MF_00530"/>
    </source>
</evidence>
<evidence type="ECO:0000305" key="2"/>
<sequence>MATFHFDLVSPEMVAFSGEVDQVDIPGAEGDFGVLAGHAPVVAVIRPGILTVTAGGAQQKIVVLGGIAEVSEKGLTVLADVATATADVDMQDFAETITTMEQQLPGKVGDELDRSIERLDHYKSIQHQLSTTAMH</sequence>
<dbReference type="EMBL" id="CP000250">
    <property type="protein sequence ID" value="ABD04975.1"/>
    <property type="status" value="ALT_INIT"/>
    <property type="molecule type" value="Genomic_DNA"/>
</dbReference>
<dbReference type="RefSeq" id="WP_041797853.1">
    <property type="nucleotide sequence ID" value="NC_007778.1"/>
</dbReference>
<dbReference type="SMR" id="Q2J3I5"/>
<dbReference type="STRING" id="316058.RPB_0264"/>
<dbReference type="KEGG" id="rpb:RPB_0264"/>
<dbReference type="eggNOG" id="COG0355">
    <property type="taxonomic scope" value="Bacteria"/>
</dbReference>
<dbReference type="HOGENOM" id="CLU_084338_2_1_5"/>
<dbReference type="OrthoDB" id="9799969at2"/>
<dbReference type="Proteomes" id="UP000008809">
    <property type="component" value="Chromosome"/>
</dbReference>
<dbReference type="GO" id="GO:0005886">
    <property type="term" value="C:plasma membrane"/>
    <property type="evidence" value="ECO:0007669"/>
    <property type="project" value="UniProtKB-SubCell"/>
</dbReference>
<dbReference type="GO" id="GO:0045259">
    <property type="term" value="C:proton-transporting ATP synthase complex"/>
    <property type="evidence" value="ECO:0007669"/>
    <property type="project" value="UniProtKB-KW"/>
</dbReference>
<dbReference type="GO" id="GO:0005524">
    <property type="term" value="F:ATP binding"/>
    <property type="evidence" value="ECO:0007669"/>
    <property type="project" value="UniProtKB-UniRule"/>
</dbReference>
<dbReference type="GO" id="GO:0046933">
    <property type="term" value="F:proton-transporting ATP synthase activity, rotational mechanism"/>
    <property type="evidence" value="ECO:0007669"/>
    <property type="project" value="UniProtKB-UniRule"/>
</dbReference>
<dbReference type="CDD" id="cd12152">
    <property type="entry name" value="F1-ATPase_delta"/>
    <property type="match status" value="1"/>
</dbReference>
<dbReference type="Gene3D" id="2.60.15.10">
    <property type="entry name" value="F0F1 ATP synthase delta/epsilon subunit, N-terminal"/>
    <property type="match status" value="1"/>
</dbReference>
<dbReference type="HAMAP" id="MF_00530">
    <property type="entry name" value="ATP_synth_epsil_bac"/>
    <property type="match status" value="1"/>
</dbReference>
<dbReference type="InterPro" id="IPR001469">
    <property type="entry name" value="ATP_synth_F1_dsu/esu"/>
</dbReference>
<dbReference type="InterPro" id="IPR020546">
    <property type="entry name" value="ATP_synth_F1_dsu/esu_N"/>
</dbReference>
<dbReference type="InterPro" id="IPR036771">
    <property type="entry name" value="ATPsynth_dsu/esu_N"/>
</dbReference>
<dbReference type="NCBIfam" id="TIGR01216">
    <property type="entry name" value="ATP_synt_epsi"/>
    <property type="match status" value="1"/>
</dbReference>
<dbReference type="NCBIfam" id="NF009982">
    <property type="entry name" value="PRK13448.1"/>
    <property type="match status" value="1"/>
</dbReference>
<dbReference type="PANTHER" id="PTHR13822">
    <property type="entry name" value="ATP SYNTHASE DELTA/EPSILON CHAIN"/>
    <property type="match status" value="1"/>
</dbReference>
<dbReference type="PANTHER" id="PTHR13822:SF10">
    <property type="entry name" value="ATP SYNTHASE EPSILON CHAIN, CHLOROPLASTIC"/>
    <property type="match status" value="1"/>
</dbReference>
<dbReference type="Pfam" id="PF02823">
    <property type="entry name" value="ATP-synt_DE_N"/>
    <property type="match status" value="1"/>
</dbReference>
<dbReference type="SUPFAM" id="SSF51344">
    <property type="entry name" value="Epsilon subunit of F1F0-ATP synthase N-terminal domain"/>
    <property type="match status" value="1"/>
</dbReference>
<feature type="chain" id="PRO_0000265878" description="ATP synthase epsilon chain">
    <location>
        <begin position="1"/>
        <end position="135"/>
    </location>
</feature>
<comment type="function">
    <text evidence="1">Produces ATP from ADP in the presence of a proton gradient across the membrane.</text>
</comment>
<comment type="subunit">
    <text>F-type ATPases have 2 components, CF(1) - the catalytic core - and CF(0) - the membrane proton channel. CF(1) has five subunits: alpha(3), beta(3), gamma(1), delta(1), epsilon(1). CF(0) has three main subunits: a, b and c.</text>
</comment>
<comment type="subcellular location">
    <subcellularLocation>
        <location evidence="1">Cell inner membrane</location>
        <topology evidence="1">Peripheral membrane protein</topology>
    </subcellularLocation>
</comment>
<comment type="similarity">
    <text evidence="1">Belongs to the ATPase epsilon chain family.</text>
</comment>
<comment type="sequence caution" evidence="2">
    <conflict type="erroneous initiation">
        <sequence resource="EMBL-CDS" id="ABD04975"/>
    </conflict>
</comment>
<protein>
    <recommendedName>
        <fullName evidence="1">ATP synthase epsilon chain</fullName>
    </recommendedName>
    <alternativeName>
        <fullName evidence="1">ATP synthase F1 sector epsilon subunit</fullName>
    </alternativeName>
    <alternativeName>
        <fullName evidence="1">F-ATPase epsilon subunit</fullName>
    </alternativeName>
</protein>
<organism>
    <name type="scientific">Rhodopseudomonas palustris (strain HaA2)</name>
    <dbReference type="NCBI Taxonomy" id="316058"/>
    <lineage>
        <taxon>Bacteria</taxon>
        <taxon>Pseudomonadati</taxon>
        <taxon>Pseudomonadota</taxon>
        <taxon>Alphaproteobacteria</taxon>
        <taxon>Hyphomicrobiales</taxon>
        <taxon>Nitrobacteraceae</taxon>
        <taxon>Rhodopseudomonas</taxon>
    </lineage>
</organism>
<accession>Q2J3I5</accession>